<organism>
    <name type="scientific">Shewanella baltica (strain OS195)</name>
    <dbReference type="NCBI Taxonomy" id="399599"/>
    <lineage>
        <taxon>Bacteria</taxon>
        <taxon>Pseudomonadati</taxon>
        <taxon>Pseudomonadota</taxon>
        <taxon>Gammaproteobacteria</taxon>
        <taxon>Alteromonadales</taxon>
        <taxon>Shewanellaceae</taxon>
        <taxon>Shewanella</taxon>
    </lineage>
</organism>
<keyword id="KW-0131">Cell cycle</keyword>
<keyword id="KW-0132">Cell division</keyword>
<keyword id="KW-0342">GTP-binding</keyword>
<keyword id="KW-0460">Magnesium</keyword>
<keyword id="KW-0479">Metal-binding</keyword>
<keyword id="KW-0547">Nucleotide-binding</keyword>
<keyword id="KW-0717">Septation</keyword>
<gene>
    <name evidence="1" type="primary">engB</name>
    <name type="ordered locus">Sbal195_4486</name>
</gene>
<proteinExistence type="inferred from homology"/>
<accession>A9KWY5</accession>
<reference key="1">
    <citation type="submission" date="2007-11" db="EMBL/GenBank/DDBJ databases">
        <title>Complete sequence of chromosome of Shewanella baltica OS195.</title>
        <authorList>
            <consortium name="US DOE Joint Genome Institute"/>
            <person name="Copeland A."/>
            <person name="Lucas S."/>
            <person name="Lapidus A."/>
            <person name="Barry K."/>
            <person name="Glavina del Rio T."/>
            <person name="Dalin E."/>
            <person name="Tice H."/>
            <person name="Pitluck S."/>
            <person name="Chain P."/>
            <person name="Malfatti S."/>
            <person name="Shin M."/>
            <person name="Vergez L."/>
            <person name="Schmutz J."/>
            <person name="Larimer F."/>
            <person name="Land M."/>
            <person name="Hauser L."/>
            <person name="Kyrpides N."/>
            <person name="Kim E."/>
            <person name="Brettar I."/>
            <person name="Rodrigues J."/>
            <person name="Konstantinidis K."/>
            <person name="Klappenbach J."/>
            <person name="Hofle M."/>
            <person name="Tiedje J."/>
            <person name="Richardson P."/>
        </authorList>
    </citation>
    <scope>NUCLEOTIDE SEQUENCE [LARGE SCALE GENOMIC DNA]</scope>
    <source>
        <strain>OS195</strain>
    </source>
</reference>
<sequence length="219" mass="24286">MTESRIDFRRAKFLISAPDIAHLDQYLPGDVGVEIAFAGRSNAGKSSALNALTEQKSLARTSKTPGRTQLINVFELDAQRRLVDLPGYGFAQVPLALKNKWQQALGEYLQKRACLSGVVVLMDIRHPLKDLDMQMIEWAVASEIPVLALLTKSDKLAQSAKMKTVNEVRLALSEFGDWVQVEPFSSLKGTGKPKVLAILNEWCHPQWLTDELDAANNAE</sequence>
<comment type="function">
    <text evidence="1">Necessary for normal cell division and for the maintenance of normal septation.</text>
</comment>
<comment type="cofactor">
    <cofactor evidence="1">
        <name>Mg(2+)</name>
        <dbReference type="ChEBI" id="CHEBI:18420"/>
    </cofactor>
</comment>
<comment type="similarity">
    <text evidence="1">Belongs to the TRAFAC class TrmE-Era-EngA-EngB-Septin-like GTPase superfamily. EngB GTPase family.</text>
</comment>
<dbReference type="EMBL" id="CP000891">
    <property type="protein sequence ID" value="ABX51643.1"/>
    <property type="molecule type" value="Genomic_DNA"/>
</dbReference>
<dbReference type="SMR" id="A9KWY5"/>
<dbReference type="KEGG" id="sbn:Sbal195_4486"/>
<dbReference type="HOGENOM" id="CLU_033732_1_2_6"/>
<dbReference type="Proteomes" id="UP000000770">
    <property type="component" value="Chromosome"/>
</dbReference>
<dbReference type="GO" id="GO:0005829">
    <property type="term" value="C:cytosol"/>
    <property type="evidence" value="ECO:0007669"/>
    <property type="project" value="TreeGrafter"/>
</dbReference>
<dbReference type="GO" id="GO:0005525">
    <property type="term" value="F:GTP binding"/>
    <property type="evidence" value="ECO:0007669"/>
    <property type="project" value="UniProtKB-UniRule"/>
</dbReference>
<dbReference type="GO" id="GO:0046872">
    <property type="term" value="F:metal ion binding"/>
    <property type="evidence" value="ECO:0007669"/>
    <property type="project" value="UniProtKB-KW"/>
</dbReference>
<dbReference type="GO" id="GO:0000917">
    <property type="term" value="P:division septum assembly"/>
    <property type="evidence" value="ECO:0007669"/>
    <property type="project" value="UniProtKB-KW"/>
</dbReference>
<dbReference type="CDD" id="cd01876">
    <property type="entry name" value="YihA_EngB"/>
    <property type="match status" value="1"/>
</dbReference>
<dbReference type="FunFam" id="3.40.50.300:FF:000098">
    <property type="entry name" value="Probable GTP-binding protein EngB"/>
    <property type="match status" value="1"/>
</dbReference>
<dbReference type="Gene3D" id="3.40.50.300">
    <property type="entry name" value="P-loop containing nucleotide triphosphate hydrolases"/>
    <property type="match status" value="1"/>
</dbReference>
<dbReference type="HAMAP" id="MF_00321">
    <property type="entry name" value="GTPase_EngB"/>
    <property type="match status" value="1"/>
</dbReference>
<dbReference type="InterPro" id="IPR030393">
    <property type="entry name" value="G_ENGB_dom"/>
</dbReference>
<dbReference type="InterPro" id="IPR006073">
    <property type="entry name" value="GTP-bd"/>
</dbReference>
<dbReference type="InterPro" id="IPR019987">
    <property type="entry name" value="GTP-bd_ribosome_bio_YsxC"/>
</dbReference>
<dbReference type="InterPro" id="IPR027417">
    <property type="entry name" value="P-loop_NTPase"/>
</dbReference>
<dbReference type="NCBIfam" id="TIGR03598">
    <property type="entry name" value="GTPase_YsxC"/>
    <property type="match status" value="1"/>
</dbReference>
<dbReference type="PANTHER" id="PTHR11649:SF13">
    <property type="entry name" value="ENGB-TYPE G DOMAIN-CONTAINING PROTEIN"/>
    <property type="match status" value="1"/>
</dbReference>
<dbReference type="PANTHER" id="PTHR11649">
    <property type="entry name" value="MSS1/TRME-RELATED GTP-BINDING PROTEIN"/>
    <property type="match status" value="1"/>
</dbReference>
<dbReference type="Pfam" id="PF01926">
    <property type="entry name" value="MMR_HSR1"/>
    <property type="match status" value="1"/>
</dbReference>
<dbReference type="SUPFAM" id="SSF52540">
    <property type="entry name" value="P-loop containing nucleoside triphosphate hydrolases"/>
    <property type="match status" value="1"/>
</dbReference>
<dbReference type="PROSITE" id="PS51706">
    <property type="entry name" value="G_ENGB"/>
    <property type="match status" value="1"/>
</dbReference>
<name>ENGB_SHEB9</name>
<feature type="chain" id="PRO_1000079181" description="Probable GTP-binding protein EngB">
    <location>
        <begin position="1"/>
        <end position="219"/>
    </location>
</feature>
<feature type="domain" description="EngB-type G" evidence="1">
    <location>
        <begin position="31"/>
        <end position="205"/>
    </location>
</feature>
<feature type="binding site" evidence="1">
    <location>
        <begin position="39"/>
        <end position="46"/>
    </location>
    <ligand>
        <name>GTP</name>
        <dbReference type="ChEBI" id="CHEBI:37565"/>
    </ligand>
</feature>
<feature type="binding site" evidence="1">
    <location>
        <position position="46"/>
    </location>
    <ligand>
        <name>Mg(2+)</name>
        <dbReference type="ChEBI" id="CHEBI:18420"/>
    </ligand>
</feature>
<feature type="binding site" evidence="1">
    <location>
        <begin position="66"/>
        <end position="70"/>
    </location>
    <ligand>
        <name>GTP</name>
        <dbReference type="ChEBI" id="CHEBI:37565"/>
    </ligand>
</feature>
<feature type="binding site" evidence="1">
    <location>
        <position position="68"/>
    </location>
    <ligand>
        <name>Mg(2+)</name>
        <dbReference type="ChEBI" id="CHEBI:18420"/>
    </ligand>
</feature>
<feature type="binding site" evidence="1">
    <location>
        <begin position="84"/>
        <end position="87"/>
    </location>
    <ligand>
        <name>GTP</name>
        <dbReference type="ChEBI" id="CHEBI:37565"/>
    </ligand>
</feature>
<feature type="binding site" evidence="1">
    <location>
        <begin position="151"/>
        <end position="154"/>
    </location>
    <ligand>
        <name>GTP</name>
        <dbReference type="ChEBI" id="CHEBI:37565"/>
    </ligand>
</feature>
<feature type="binding site" evidence="1">
    <location>
        <begin position="184"/>
        <end position="186"/>
    </location>
    <ligand>
        <name>GTP</name>
        <dbReference type="ChEBI" id="CHEBI:37565"/>
    </ligand>
</feature>
<evidence type="ECO:0000255" key="1">
    <source>
        <dbReference type="HAMAP-Rule" id="MF_00321"/>
    </source>
</evidence>
<protein>
    <recommendedName>
        <fullName evidence="1">Probable GTP-binding protein EngB</fullName>
    </recommendedName>
</protein>